<dbReference type="EMBL" id="CP001114">
    <property type="protein sequence ID" value="ACO45522.1"/>
    <property type="molecule type" value="Genomic_DNA"/>
</dbReference>
<dbReference type="RefSeq" id="WP_012692645.1">
    <property type="nucleotide sequence ID" value="NC_012526.1"/>
</dbReference>
<dbReference type="STRING" id="546414.Deide_06670"/>
<dbReference type="PaxDb" id="546414-Deide_06670"/>
<dbReference type="KEGG" id="ddr:Deide_06670"/>
<dbReference type="eggNOG" id="COG0254">
    <property type="taxonomic scope" value="Bacteria"/>
</dbReference>
<dbReference type="HOGENOM" id="CLU_114306_4_2_0"/>
<dbReference type="OrthoDB" id="9803251at2"/>
<dbReference type="Proteomes" id="UP000002208">
    <property type="component" value="Chromosome"/>
</dbReference>
<dbReference type="GO" id="GO:1990904">
    <property type="term" value="C:ribonucleoprotein complex"/>
    <property type="evidence" value="ECO:0007669"/>
    <property type="project" value="UniProtKB-KW"/>
</dbReference>
<dbReference type="GO" id="GO:0005840">
    <property type="term" value="C:ribosome"/>
    <property type="evidence" value="ECO:0007669"/>
    <property type="project" value="UniProtKB-KW"/>
</dbReference>
<dbReference type="GO" id="GO:0019843">
    <property type="term" value="F:rRNA binding"/>
    <property type="evidence" value="ECO:0007669"/>
    <property type="project" value="UniProtKB-KW"/>
</dbReference>
<dbReference type="GO" id="GO:0003735">
    <property type="term" value="F:structural constituent of ribosome"/>
    <property type="evidence" value="ECO:0007669"/>
    <property type="project" value="InterPro"/>
</dbReference>
<dbReference type="GO" id="GO:0006412">
    <property type="term" value="P:translation"/>
    <property type="evidence" value="ECO:0007669"/>
    <property type="project" value="UniProtKB-UniRule"/>
</dbReference>
<dbReference type="Gene3D" id="4.10.830.30">
    <property type="entry name" value="Ribosomal protein L31"/>
    <property type="match status" value="1"/>
</dbReference>
<dbReference type="HAMAP" id="MF_00501">
    <property type="entry name" value="Ribosomal_bL31_1"/>
    <property type="match status" value="1"/>
</dbReference>
<dbReference type="InterPro" id="IPR034704">
    <property type="entry name" value="Ribosomal_bL28/bL31-like_sf"/>
</dbReference>
<dbReference type="InterPro" id="IPR002150">
    <property type="entry name" value="Ribosomal_bL31"/>
</dbReference>
<dbReference type="InterPro" id="IPR027491">
    <property type="entry name" value="Ribosomal_bL31_A"/>
</dbReference>
<dbReference type="InterPro" id="IPR042105">
    <property type="entry name" value="Ribosomal_bL31_sf"/>
</dbReference>
<dbReference type="NCBIfam" id="TIGR00105">
    <property type="entry name" value="L31"/>
    <property type="match status" value="1"/>
</dbReference>
<dbReference type="NCBIfam" id="NF001809">
    <property type="entry name" value="PRK00528.1"/>
    <property type="match status" value="1"/>
</dbReference>
<dbReference type="PANTHER" id="PTHR33280">
    <property type="entry name" value="50S RIBOSOMAL PROTEIN L31, CHLOROPLASTIC"/>
    <property type="match status" value="1"/>
</dbReference>
<dbReference type="PANTHER" id="PTHR33280:SF1">
    <property type="entry name" value="LARGE RIBOSOMAL SUBUNIT PROTEIN BL31C"/>
    <property type="match status" value="1"/>
</dbReference>
<dbReference type="Pfam" id="PF01197">
    <property type="entry name" value="Ribosomal_L31"/>
    <property type="match status" value="1"/>
</dbReference>
<dbReference type="PRINTS" id="PR01249">
    <property type="entry name" value="RIBOSOMALL31"/>
</dbReference>
<dbReference type="SUPFAM" id="SSF143800">
    <property type="entry name" value="L28p-like"/>
    <property type="match status" value="1"/>
</dbReference>
<dbReference type="PROSITE" id="PS01143">
    <property type="entry name" value="RIBOSOMAL_L31"/>
    <property type="match status" value="1"/>
</dbReference>
<sequence length="72" mass="8490">MKKDIHPKAVPTKIIYQGKVVMETLSTRPEIHVDVWSGVHPFWTGEERFVDTEGRVDKFNKRFGDSYRNKKK</sequence>
<accession>C1D0Z8</accession>
<keyword id="KW-1185">Reference proteome</keyword>
<keyword id="KW-0687">Ribonucleoprotein</keyword>
<keyword id="KW-0689">Ribosomal protein</keyword>
<keyword id="KW-0694">RNA-binding</keyword>
<keyword id="KW-0699">rRNA-binding</keyword>
<organism>
    <name type="scientific">Deinococcus deserti (strain DSM 17065 / CIP 109153 / LMG 22923 / VCD115)</name>
    <dbReference type="NCBI Taxonomy" id="546414"/>
    <lineage>
        <taxon>Bacteria</taxon>
        <taxon>Thermotogati</taxon>
        <taxon>Deinococcota</taxon>
        <taxon>Deinococci</taxon>
        <taxon>Deinococcales</taxon>
        <taxon>Deinococcaceae</taxon>
        <taxon>Deinococcus</taxon>
    </lineage>
</organism>
<feature type="chain" id="PRO_1000206517" description="Large ribosomal subunit protein bL31">
    <location>
        <begin position="1"/>
        <end position="72"/>
    </location>
</feature>
<protein>
    <recommendedName>
        <fullName evidence="1">Large ribosomal subunit protein bL31</fullName>
    </recommendedName>
    <alternativeName>
        <fullName evidence="2">50S ribosomal protein L31</fullName>
    </alternativeName>
</protein>
<proteinExistence type="inferred from homology"/>
<name>RL31_DEIDV</name>
<evidence type="ECO:0000255" key="1">
    <source>
        <dbReference type="HAMAP-Rule" id="MF_00501"/>
    </source>
</evidence>
<evidence type="ECO:0000305" key="2"/>
<reference key="1">
    <citation type="journal article" date="2009" name="PLoS Genet.">
        <title>Alliance of proteomics and genomics to unravel the specificities of Sahara bacterium Deinococcus deserti.</title>
        <authorList>
            <person name="de Groot A."/>
            <person name="Dulermo R."/>
            <person name="Ortet P."/>
            <person name="Blanchard L."/>
            <person name="Guerin P."/>
            <person name="Fernandez B."/>
            <person name="Vacherie B."/>
            <person name="Dossat C."/>
            <person name="Jolivet E."/>
            <person name="Siguier P."/>
            <person name="Chandler M."/>
            <person name="Barakat M."/>
            <person name="Dedieu A."/>
            <person name="Barbe V."/>
            <person name="Heulin T."/>
            <person name="Sommer S."/>
            <person name="Achouak W."/>
            <person name="Armengaud J."/>
        </authorList>
    </citation>
    <scope>NUCLEOTIDE SEQUENCE [LARGE SCALE GENOMIC DNA]</scope>
    <source>
        <strain>DSM 17065 / CIP 109153 / LMG 22923 / VCD115</strain>
    </source>
</reference>
<comment type="function">
    <text evidence="1">Binds the 23S rRNA.</text>
</comment>
<comment type="subunit">
    <text evidence="1">Part of the 50S ribosomal subunit.</text>
</comment>
<comment type="similarity">
    <text evidence="1">Belongs to the bacterial ribosomal protein bL31 family. Type A subfamily.</text>
</comment>
<gene>
    <name evidence="1" type="primary">rpmE</name>
    <name type="ordered locus">Deide_06670</name>
</gene>